<evidence type="ECO:0000250" key="1">
    <source>
        <dbReference type="UniProtKB" id="D1L2X0"/>
    </source>
</evidence>
<evidence type="ECO:0000269" key="2">
    <source>
    </source>
</evidence>
<evidence type="ECO:0000303" key="3">
    <source>
    </source>
</evidence>
<evidence type="ECO:0000305" key="4"/>
<evidence type="ECO:0000305" key="5">
    <source>
    </source>
</evidence>
<name>DPOL1_BPK31</name>
<feature type="chain" id="PRO_0000458711" description="Depolymerase 1, capsule KN3-specific">
    <location>
        <begin position="1"/>
        <end position="792"/>
    </location>
</feature>
<keyword id="KW-1238">Degradation of host capsule during virus entry</keyword>
<keyword id="KW-1235">Degradation of host cell envelope components during virus entry</keyword>
<keyword id="KW-0945">Host-virus interaction</keyword>
<keyword id="KW-0456">Lyase</keyword>
<keyword id="KW-1185">Reference proteome</keyword>
<keyword id="KW-1233">Viral attachment to host adhesion receptor</keyword>
<keyword id="KW-1161">Viral attachment to host cell</keyword>
<keyword id="KW-1227">Viral tail protein</keyword>
<keyword id="KW-0946">Virion</keyword>
<keyword id="KW-1160">Virus entry into host cell</keyword>
<proteinExistence type="inferred from homology"/>
<organismHost>
    <name type="scientific">Klebsiella pneumoniae</name>
    <dbReference type="NCBI Taxonomy" id="573"/>
</organismHost>
<organism>
    <name type="scientific">Klebsiella phage KN3-1</name>
    <name type="common">Bacteriophage KN3-1</name>
    <dbReference type="NCBI Taxonomy" id="2282630"/>
    <lineage>
        <taxon>Viruses</taxon>
        <taxon>Duplodnaviria</taxon>
        <taxon>Heunggongvirae</taxon>
        <taxon>Uroviricota</taxon>
        <taxon>Caudoviricetes</taxon>
        <taxon>Autographiviridae</taxon>
        <taxon>Studiervirinae</taxon>
        <taxon>Przondovirus</taxon>
        <taxon>Przondovirus KN31</taxon>
    </lineage>
</organism>
<accession>A0A3T0ZBY1</accession>
<protein>
    <recommendedName>
        <fullName evidence="4">Depolymerase 1, capsule KN3-specific</fullName>
    </recommendedName>
    <alternativeName>
        <fullName evidence="3">KN3dep</fullName>
    </alternativeName>
    <alternativeName>
        <fullName evidence="4">Probable tail spike protein</fullName>
    </alternativeName>
</protein>
<dbReference type="EMBL" id="LC413194">
    <property type="protein sequence ID" value="BBF66867.1"/>
    <property type="molecule type" value="Genomic_DNA"/>
</dbReference>
<dbReference type="RefSeq" id="YP_009818026.1">
    <property type="nucleotide sequence ID" value="NC_048131.1"/>
</dbReference>
<dbReference type="SMR" id="A0A3T0ZBY1"/>
<dbReference type="GeneID" id="55009361"/>
<dbReference type="Proteomes" id="UP000279551">
    <property type="component" value="Genome"/>
</dbReference>
<dbReference type="GO" id="GO:0098015">
    <property type="term" value="C:virus tail"/>
    <property type="evidence" value="ECO:0007669"/>
    <property type="project" value="UniProtKB-KW"/>
</dbReference>
<dbReference type="GO" id="GO:0016829">
    <property type="term" value="F:lyase activity"/>
    <property type="evidence" value="ECO:0007669"/>
    <property type="project" value="UniProtKB-KW"/>
</dbReference>
<dbReference type="GO" id="GO:0098671">
    <property type="term" value="P:adhesion receptor-mediated virion attachment to host cell"/>
    <property type="evidence" value="ECO:0007669"/>
    <property type="project" value="UniProtKB-KW"/>
</dbReference>
<dbReference type="GO" id="GO:0098994">
    <property type="term" value="P:symbiont entry into host cell via disruption of host cell envelope"/>
    <property type="evidence" value="ECO:0007669"/>
    <property type="project" value="UniProtKB-KW"/>
</dbReference>
<dbReference type="GO" id="GO:0098996">
    <property type="term" value="P:symbiont entry into host cell via disruption of host cell glycocalyx"/>
    <property type="evidence" value="ECO:0007669"/>
    <property type="project" value="UniProtKB-KW"/>
</dbReference>
<dbReference type="Gene3D" id="2.160.20.10">
    <property type="entry name" value="Single-stranded right-handed beta-helix, Pectin lyase-like"/>
    <property type="match status" value="1"/>
</dbReference>
<dbReference type="InterPro" id="IPR012334">
    <property type="entry name" value="Pectin_lyas_fold"/>
</dbReference>
<dbReference type="InterPro" id="IPR011050">
    <property type="entry name" value="Pectin_lyase_fold/virulence"/>
</dbReference>
<dbReference type="InterPro" id="IPR005604">
    <property type="entry name" value="Phage_T7_tail_fibre-like_N"/>
</dbReference>
<dbReference type="InterPro" id="IPR024535">
    <property type="entry name" value="RHGA/B-epi-like_pectate_lyase"/>
</dbReference>
<dbReference type="Pfam" id="PF12708">
    <property type="entry name" value="Pect-lyase_RHGA_epim"/>
    <property type="match status" value="1"/>
</dbReference>
<dbReference type="Pfam" id="PF03906">
    <property type="entry name" value="Phage_T7_tail"/>
    <property type="match status" value="1"/>
</dbReference>
<dbReference type="SUPFAM" id="SSF51126">
    <property type="entry name" value="Pectin lyase-like"/>
    <property type="match status" value="1"/>
</dbReference>
<reference key="1">
    <citation type="journal article" date="2019" name="Microb. Biotechnol.">
        <title>Identification of three podoviruses infecting Klebsiella encoding capsule depolymerases that digest specific capsular types.</title>
        <authorList>
            <person name="Pan Y.J."/>
            <person name="Lin T.L."/>
            <person name="Chen Y.Y."/>
            <person name="Lai P.H."/>
            <person name="Tsai Y.T."/>
            <person name="Hsu C.R."/>
            <person name="Hsieh P.F."/>
            <person name="Lin Y.T."/>
            <person name="Wang J.T."/>
        </authorList>
    </citation>
    <scope>NUCLEOTIDE SEQUENCE [LARGE SCALE GENOMIC DNA]</scope>
    <scope>FUNCTION</scope>
</reference>
<reference key="2">
    <citation type="journal article" date="2019" name="Front. Microbiol.">
        <title>Modeling the Architecture of Depolymerase-Containing Receptor Binding Proteins in Klebsiella Phages.</title>
        <authorList>
            <person name="Latka A."/>
            <person name="Leiman P.G."/>
            <person name="Drulis-Kawa Z."/>
            <person name="Briers Y."/>
        </authorList>
    </citation>
    <scope>REVIEW</scope>
</reference>
<comment type="function">
    <text evidence="2 5">Functions as a receptor binding protein (RBP) and probably mediates the attachment to the host capsular exopolysaccharides (Probable). Displays a depolymerase activity that specifically degrades the KN3-type polysaccharides of Klebsiella pneumoniae capsule, which allows the phage to reach the host cell membrane and bind the entry receptor (PubMed:30706654).</text>
</comment>
<comment type="subunit">
    <text evidence="1">Interacts (via N-terminus) with depolymerase 2 (via N-terminus); this interaction probably gives rise to a branched tailspike.</text>
</comment>
<comment type="subcellular location">
    <subcellularLocation>
        <location evidence="4">Virion</location>
    </subcellularLocation>
    <text evidence="1 4">Tail appendage (Probable). Depolymerase 1 is connected to the phage tail via an N-terminal anchor domain, while depolymerase 2 is attached to depolymerase 1 (By similarity).</text>
</comment>
<comment type="domain">
    <text evidence="1 4">The N-terminus anchors the RBP to the virion (By similarity). The central part and C-terminus probably binds and degrades the host exopolysaccharides (Probable).</text>
</comment>
<comment type="similarity">
    <text evidence="4">In the N-terminal section; belongs to the Teseptimavirus fiber family.</text>
</comment>
<comment type="similarity">
    <text evidence="4">Belongs to the Teseptimavirus fiber family.</text>
</comment>
<sequence>MDQDIKTVIQYPVGATEFDIPFDYLSRKFVRVSLVSDDNRRLLSNITEYRYVSKTRVKLLVETTGFDRVEIRRFTSASERIVDFSDGSVLRANDLNVSQLQSAHIAEEARDSALMAMPQDDAGNLDARNRRIVRLAPGIDGTDAINKDQLDTTLGEAGGILSEIIEVKGDFYEYLEKFAEDTSMIRGVVWVYNAGSAVGGETVVKVEKPTTVYSVPYLEINGSRQEIGYHYDFDPATQELTLAKPLVAGDFLMAMTTESYLPIESLLASPVGAEAIGTKSGKTIQRILDESPRYFTPEMFGAKGDGLTNDTKALQDAVDAAMSSGGGKVILKGNTTYLFDHLLVAREKSPQSRFEARLIIEGSGGSVLKHTGSITEAAHAFWVRGVLGTGSLADIYMRDVVLRDFSINGTVTSTANGLVLQRATAVRIENVYVNDFGGNGYRALDLYDSTIDSLEVQRCGIVPGATVGSYGMYITGAYDQSNANHYIACRVEMCPLIIAIDKGCRHNYFHNCKFEQGRVNPTTSNPVYINDATELAFEACQFVQNYDSAIRFLVVTDALFPYWVTHGTEKVVNFTDCSFVCSRSVTAYWIDVAYTTFTACAFSSCNGGTQFPLSLGKNSFLTDAKVVIRTAEGNVLELKGSHSRVTNLKVTYFQQPTSGVFIKFTGLPGLSDVVVDGFTFENFEPFAPYSGHTDFMGDVVVMRRAGYVYNGTNDRVIYGCSTLSYSGASPATWNNLRNGYNGQVVIVHAKSNPVTLDVSGGLIITKTGSNVTIPTNGVSALVNISGVWRQLY</sequence>